<feature type="chain" id="PRO_0000060855" description="Cytochrome b">
    <location>
        <begin position="1"/>
        <end position="380"/>
    </location>
</feature>
<feature type="transmembrane region" description="Helical" evidence="2">
    <location>
        <begin position="33"/>
        <end position="53"/>
    </location>
</feature>
<feature type="transmembrane region" description="Helical" evidence="2">
    <location>
        <begin position="77"/>
        <end position="98"/>
    </location>
</feature>
<feature type="transmembrane region" description="Helical" evidence="2">
    <location>
        <begin position="113"/>
        <end position="133"/>
    </location>
</feature>
<feature type="transmembrane region" description="Helical" evidence="2">
    <location>
        <begin position="178"/>
        <end position="198"/>
    </location>
</feature>
<feature type="transmembrane region" description="Helical" evidence="2">
    <location>
        <begin position="226"/>
        <end position="246"/>
    </location>
</feature>
<feature type="transmembrane region" description="Helical" evidence="2">
    <location>
        <begin position="288"/>
        <end position="308"/>
    </location>
</feature>
<feature type="transmembrane region" description="Helical" evidence="2">
    <location>
        <begin position="320"/>
        <end position="340"/>
    </location>
</feature>
<feature type="transmembrane region" description="Helical" evidence="2">
    <location>
        <begin position="347"/>
        <end position="367"/>
    </location>
</feature>
<feature type="binding site" description="axial binding residue" evidence="2">
    <location>
        <position position="83"/>
    </location>
    <ligand>
        <name>heme b</name>
        <dbReference type="ChEBI" id="CHEBI:60344"/>
        <label>b562</label>
    </ligand>
    <ligandPart>
        <name>Fe</name>
        <dbReference type="ChEBI" id="CHEBI:18248"/>
    </ligandPart>
</feature>
<feature type="binding site" description="axial binding residue" evidence="2">
    <location>
        <position position="97"/>
    </location>
    <ligand>
        <name>heme b</name>
        <dbReference type="ChEBI" id="CHEBI:60344"/>
        <label>b566</label>
    </ligand>
    <ligandPart>
        <name>Fe</name>
        <dbReference type="ChEBI" id="CHEBI:18248"/>
    </ligandPart>
</feature>
<feature type="binding site" description="axial binding residue" evidence="2">
    <location>
        <position position="182"/>
    </location>
    <ligand>
        <name>heme b</name>
        <dbReference type="ChEBI" id="CHEBI:60344"/>
        <label>b562</label>
    </ligand>
    <ligandPart>
        <name>Fe</name>
        <dbReference type="ChEBI" id="CHEBI:18248"/>
    </ligandPart>
</feature>
<feature type="binding site" description="axial binding residue" evidence="2">
    <location>
        <position position="196"/>
    </location>
    <ligand>
        <name>heme b</name>
        <dbReference type="ChEBI" id="CHEBI:60344"/>
        <label>b566</label>
    </ligand>
    <ligandPart>
        <name>Fe</name>
        <dbReference type="ChEBI" id="CHEBI:18248"/>
    </ligandPart>
</feature>
<feature type="binding site" evidence="2">
    <location>
        <position position="201"/>
    </location>
    <ligand>
        <name>a ubiquinone</name>
        <dbReference type="ChEBI" id="CHEBI:16389"/>
    </ligand>
</feature>
<organism>
    <name type="scientific">Dactyloptena peterseni</name>
    <name type="common">Starry flying gurnard</name>
    <name type="synonym">Dactylopterus peterseni</name>
    <dbReference type="NCBI Taxonomy" id="143342"/>
    <lineage>
        <taxon>Eukaryota</taxon>
        <taxon>Metazoa</taxon>
        <taxon>Chordata</taxon>
        <taxon>Craniata</taxon>
        <taxon>Vertebrata</taxon>
        <taxon>Euteleostomi</taxon>
        <taxon>Actinopterygii</taxon>
        <taxon>Neopterygii</taxon>
        <taxon>Teleostei</taxon>
        <taxon>Neoteleostei</taxon>
        <taxon>Acanthomorphata</taxon>
        <taxon>Syngnathiaria</taxon>
        <taxon>Syngnathiformes</taxon>
        <taxon>Dactylopteroidei</taxon>
        <taxon>Dactylopteridae</taxon>
        <taxon>Dactyloptena</taxon>
    </lineage>
</organism>
<gene>
    <name type="primary">mt-cyb</name>
    <name type="synonym">cob</name>
    <name type="synonym">cytb</name>
    <name type="synonym">mtcyb</name>
</gene>
<geneLocation type="mitochondrion"/>
<keyword id="KW-0249">Electron transport</keyword>
<keyword id="KW-0349">Heme</keyword>
<keyword id="KW-0408">Iron</keyword>
<keyword id="KW-0472">Membrane</keyword>
<keyword id="KW-0479">Metal-binding</keyword>
<keyword id="KW-0496">Mitochondrion</keyword>
<keyword id="KW-0999">Mitochondrion inner membrane</keyword>
<keyword id="KW-0679">Respiratory chain</keyword>
<keyword id="KW-0812">Transmembrane</keyword>
<keyword id="KW-1133">Transmembrane helix</keyword>
<keyword id="KW-0813">Transport</keyword>
<keyword id="KW-0830">Ubiquinone</keyword>
<evidence type="ECO:0000250" key="1"/>
<evidence type="ECO:0000250" key="2">
    <source>
        <dbReference type="UniProtKB" id="P00157"/>
    </source>
</evidence>
<evidence type="ECO:0000255" key="3">
    <source>
        <dbReference type="PROSITE-ProRule" id="PRU00967"/>
    </source>
</evidence>
<evidence type="ECO:0000255" key="4">
    <source>
        <dbReference type="PROSITE-ProRule" id="PRU00968"/>
    </source>
</evidence>
<reference key="1">
    <citation type="journal article" date="2001" name="Mol. Biol. Evol.">
        <title>Mitogenomic exploration of higher teleostean phylogenies: a case study for moderate-scale evolutionary genomics with 38 newly determined complete mitochondrial DNA sequences.</title>
        <authorList>
            <person name="Miya M."/>
            <person name="Kawaguchi A."/>
            <person name="Nishida M."/>
        </authorList>
    </citation>
    <scope>NUCLEOTIDE SEQUENCE [GENOMIC DNA]</scope>
</reference>
<sequence>MTNLRKTHPLLKIANDALVDLPAPANISVWWNFGSLLGLCLITQIATGLFLAMHYTSDIATAFSSVAHICRDVNYGWLIRNLHANGASFFFICIYLHIGRGLYYGSYLYKETWNVGVILLLLVMMTAFVGYVLPWGQMSFWGATVITNLLSAVPYVGNSLVQWIWGGFSVDNATLTRFFAFHFLLPFIIAAATVIHLLFLHETGSNNPTGLNSDADKISFHPYFSYKDLLGFAALLIALTSLALFSPNLLGDPDNFTPANPLVTPPHIKPEWYFLFAYAILRSIPNKLGGVLALLFSILVLMLVPILHTSKQRGLTFRPITQFLFWTLVADVIILTWIGGMPVEHPFIIIGQIASFLYFFLFLVLTPLAGWLENKALEWS</sequence>
<protein>
    <recommendedName>
        <fullName>Cytochrome b</fullName>
    </recommendedName>
    <alternativeName>
        <fullName>Complex III subunit 3</fullName>
    </alternativeName>
    <alternativeName>
        <fullName>Complex III subunit III</fullName>
    </alternativeName>
    <alternativeName>
        <fullName>Cytochrome b-c1 complex subunit 3</fullName>
    </alternativeName>
    <alternativeName>
        <fullName>Ubiquinol-cytochrome-c reductase complex cytochrome b subunit</fullName>
    </alternativeName>
</protein>
<dbReference type="EMBL" id="AP002947">
    <property type="protein sequence ID" value="BAB70403.1"/>
    <property type="molecule type" value="Genomic_DNA"/>
</dbReference>
<dbReference type="RefSeq" id="NP_443683.1">
    <property type="nucleotide sequence ID" value="NC_003194.1"/>
</dbReference>
<dbReference type="SMR" id="Q94SD0"/>
<dbReference type="GeneID" id="804370"/>
<dbReference type="CTD" id="4519"/>
<dbReference type="GO" id="GO:0005743">
    <property type="term" value="C:mitochondrial inner membrane"/>
    <property type="evidence" value="ECO:0007669"/>
    <property type="project" value="UniProtKB-SubCell"/>
</dbReference>
<dbReference type="GO" id="GO:0045275">
    <property type="term" value="C:respiratory chain complex III"/>
    <property type="evidence" value="ECO:0007669"/>
    <property type="project" value="InterPro"/>
</dbReference>
<dbReference type="GO" id="GO:0046872">
    <property type="term" value="F:metal ion binding"/>
    <property type="evidence" value="ECO:0007669"/>
    <property type="project" value="UniProtKB-KW"/>
</dbReference>
<dbReference type="GO" id="GO:0008121">
    <property type="term" value="F:ubiquinol-cytochrome-c reductase activity"/>
    <property type="evidence" value="ECO:0007669"/>
    <property type="project" value="InterPro"/>
</dbReference>
<dbReference type="GO" id="GO:0006122">
    <property type="term" value="P:mitochondrial electron transport, ubiquinol to cytochrome c"/>
    <property type="evidence" value="ECO:0007669"/>
    <property type="project" value="TreeGrafter"/>
</dbReference>
<dbReference type="CDD" id="cd00290">
    <property type="entry name" value="cytochrome_b_C"/>
    <property type="match status" value="1"/>
</dbReference>
<dbReference type="CDD" id="cd00284">
    <property type="entry name" value="Cytochrome_b_N"/>
    <property type="match status" value="1"/>
</dbReference>
<dbReference type="FunFam" id="1.20.810.10:FF:000002">
    <property type="entry name" value="Cytochrome b"/>
    <property type="match status" value="1"/>
</dbReference>
<dbReference type="Gene3D" id="1.20.810.10">
    <property type="entry name" value="Cytochrome Bc1 Complex, Chain C"/>
    <property type="match status" value="1"/>
</dbReference>
<dbReference type="InterPro" id="IPR005798">
    <property type="entry name" value="Cyt_b/b6_C"/>
</dbReference>
<dbReference type="InterPro" id="IPR036150">
    <property type="entry name" value="Cyt_b/b6_C_sf"/>
</dbReference>
<dbReference type="InterPro" id="IPR005797">
    <property type="entry name" value="Cyt_b/b6_N"/>
</dbReference>
<dbReference type="InterPro" id="IPR027387">
    <property type="entry name" value="Cytb/b6-like_sf"/>
</dbReference>
<dbReference type="InterPro" id="IPR030689">
    <property type="entry name" value="Cytochrome_b"/>
</dbReference>
<dbReference type="InterPro" id="IPR048260">
    <property type="entry name" value="Cytochrome_b_C_euk/bac"/>
</dbReference>
<dbReference type="InterPro" id="IPR048259">
    <property type="entry name" value="Cytochrome_b_N_euk/bac"/>
</dbReference>
<dbReference type="InterPro" id="IPR016174">
    <property type="entry name" value="Di-haem_cyt_TM"/>
</dbReference>
<dbReference type="PANTHER" id="PTHR19271">
    <property type="entry name" value="CYTOCHROME B"/>
    <property type="match status" value="1"/>
</dbReference>
<dbReference type="PANTHER" id="PTHR19271:SF16">
    <property type="entry name" value="CYTOCHROME B"/>
    <property type="match status" value="1"/>
</dbReference>
<dbReference type="Pfam" id="PF00032">
    <property type="entry name" value="Cytochrom_B_C"/>
    <property type="match status" value="1"/>
</dbReference>
<dbReference type="Pfam" id="PF00033">
    <property type="entry name" value="Cytochrome_B"/>
    <property type="match status" value="1"/>
</dbReference>
<dbReference type="PIRSF" id="PIRSF038885">
    <property type="entry name" value="COB"/>
    <property type="match status" value="1"/>
</dbReference>
<dbReference type="SUPFAM" id="SSF81648">
    <property type="entry name" value="a domain/subunit of cytochrome bc1 complex (Ubiquinol-cytochrome c reductase)"/>
    <property type="match status" value="1"/>
</dbReference>
<dbReference type="SUPFAM" id="SSF81342">
    <property type="entry name" value="Transmembrane di-heme cytochromes"/>
    <property type="match status" value="1"/>
</dbReference>
<dbReference type="PROSITE" id="PS51003">
    <property type="entry name" value="CYTB_CTER"/>
    <property type="match status" value="1"/>
</dbReference>
<dbReference type="PROSITE" id="PS51002">
    <property type="entry name" value="CYTB_NTER"/>
    <property type="match status" value="1"/>
</dbReference>
<name>CYB_DACPE</name>
<proteinExistence type="inferred from homology"/>
<comment type="function">
    <text evidence="2">Component of the ubiquinol-cytochrome c reductase complex (complex III or cytochrome b-c1 complex) that is part of the mitochondrial respiratory chain. The b-c1 complex mediates electron transfer from ubiquinol to cytochrome c. Contributes to the generation of a proton gradient across the mitochondrial membrane that is then used for ATP synthesis.</text>
</comment>
<comment type="cofactor">
    <cofactor evidence="2">
        <name>heme b</name>
        <dbReference type="ChEBI" id="CHEBI:60344"/>
    </cofactor>
    <text evidence="2">Binds 2 heme b groups non-covalently.</text>
</comment>
<comment type="subunit">
    <text evidence="2">The cytochrome bc1 complex contains 3 respiratory subunits (MT-CYB, CYC1 and UQCRFS1), 2 core proteins (UQCRC1 and UQCRC2) and probably 6 low-molecular weight proteins.</text>
</comment>
<comment type="subcellular location">
    <subcellularLocation>
        <location evidence="2">Mitochondrion inner membrane</location>
        <topology evidence="2">Multi-pass membrane protein</topology>
    </subcellularLocation>
</comment>
<comment type="miscellaneous">
    <text evidence="1">Heme 1 (or BL or b562) is low-potential and absorbs at about 562 nm, and heme 2 (or BH or b566) is high-potential and absorbs at about 566 nm.</text>
</comment>
<comment type="similarity">
    <text evidence="3 4">Belongs to the cytochrome b family.</text>
</comment>
<comment type="caution">
    <text evidence="2">The full-length protein contains only eight transmembrane helices, not nine as predicted by bioinformatics tools.</text>
</comment>
<accession>Q94SD0</accession>